<accession>B2VGJ1</accession>
<name>PLSY_ERWT9</name>
<feature type="chain" id="PRO_1000136089" description="Glycerol-3-phosphate acyltransferase">
    <location>
        <begin position="1"/>
        <end position="205"/>
    </location>
</feature>
<feature type="transmembrane region" description="Helical" evidence="1">
    <location>
        <begin position="3"/>
        <end position="23"/>
    </location>
</feature>
<feature type="transmembrane region" description="Helical" evidence="1">
    <location>
        <begin position="53"/>
        <end position="73"/>
    </location>
</feature>
<feature type="transmembrane region" description="Helical" evidence="1">
    <location>
        <begin position="80"/>
        <end position="100"/>
    </location>
</feature>
<feature type="transmembrane region" description="Helical" evidence="1">
    <location>
        <begin position="112"/>
        <end position="132"/>
    </location>
</feature>
<feature type="transmembrane region" description="Helical" evidence="1">
    <location>
        <begin position="138"/>
        <end position="158"/>
    </location>
</feature>
<reference key="1">
    <citation type="journal article" date="2008" name="Environ. Microbiol.">
        <title>The genome of Erwinia tasmaniensis strain Et1/99, a non-pathogenic bacterium in the genus Erwinia.</title>
        <authorList>
            <person name="Kube M."/>
            <person name="Migdoll A.M."/>
            <person name="Mueller I."/>
            <person name="Kuhl H."/>
            <person name="Beck A."/>
            <person name="Reinhardt R."/>
            <person name="Geider K."/>
        </authorList>
    </citation>
    <scope>NUCLEOTIDE SEQUENCE [LARGE SCALE GENOMIC DNA]</scope>
    <source>
        <strain>DSM 17950 / CFBP 7177 / CIP 109463 / NCPPB 4357 / Et1/99</strain>
    </source>
</reference>
<evidence type="ECO:0000255" key="1">
    <source>
        <dbReference type="HAMAP-Rule" id="MF_01043"/>
    </source>
</evidence>
<sequence length="205" mass="22369">MSVFALGMILFAYLCGSLSSAILVCRLFKLPDPRHHGSGNPGATNVLRIGGRGVAATVLVFDVLKGMLPVWLAYHLGATPFYLGLTAIAACLGHIYPVFFHFKGGKGVATALGAIAPIGWDLTGLMTGTWLLTVLLSGYSSLGAIVSALIAPFYVWWFKPQFTFPVAMLSCLILLRHHDNIQRLWRGQETRVWKKKDRRKGPGKT</sequence>
<keyword id="KW-0997">Cell inner membrane</keyword>
<keyword id="KW-1003">Cell membrane</keyword>
<keyword id="KW-0444">Lipid biosynthesis</keyword>
<keyword id="KW-0443">Lipid metabolism</keyword>
<keyword id="KW-0472">Membrane</keyword>
<keyword id="KW-0594">Phospholipid biosynthesis</keyword>
<keyword id="KW-1208">Phospholipid metabolism</keyword>
<keyword id="KW-1185">Reference proteome</keyword>
<keyword id="KW-0808">Transferase</keyword>
<keyword id="KW-0812">Transmembrane</keyword>
<keyword id="KW-1133">Transmembrane helix</keyword>
<organism>
    <name type="scientific">Erwinia tasmaniensis (strain DSM 17950 / CFBP 7177 / CIP 109463 / NCPPB 4357 / Et1/99)</name>
    <dbReference type="NCBI Taxonomy" id="465817"/>
    <lineage>
        <taxon>Bacteria</taxon>
        <taxon>Pseudomonadati</taxon>
        <taxon>Pseudomonadota</taxon>
        <taxon>Gammaproteobacteria</taxon>
        <taxon>Enterobacterales</taxon>
        <taxon>Erwiniaceae</taxon>
        <taxon>Erwinia</taxon>
    </lineage>
</organism>
<dbReference type="EC" id="2.3.1.275" evidence="1"/>
<dbReference type="EMBL" id="CU468135">
    <property type="protein sequence ID" value="CAO95465.1"/>
    <property type="molecule type" value="Genomic_DNA"/>
</dbReference>
<dbReference type="RefSeq" id="WP_012440176.1">
    <property type="nucleotide sequence ID" value="NC_010694.1"/>
</dbReference>
<dbReference type="SMR" id="B2VGJ1"/>
<dbReference type="STRING" id="465817.ETA_04190"/>
<dbReference type="KEGG" id="eta:ETA_04190"/>
<dbReference type="eggNOG" id="COG0344">
    <property type="taxonomic scope" value="Bacteria"/>
</dbReference>
<dbReference type="HOGENOM" id="CLU_081254_0_2_6"/>
<dbReference type="OrthoDB" id="9777124at2"/>
<dbReference type="UniPathway" id="UPA00085"/>
<dbReference type="Proteomes" id="UP000001726">
    <property type="component" value="Chromosome"/>
</dbReference>
<dbReference type="GO" id="GO:0005886">
    <property type="term" value="C:plasma membrane"/>
    <property type="evidence" value="ECO:0007669"/>
    <property type="project" value="UniProtKB-SubCell"/>
</dbReference>
<dbReference type="GO" id="GO:0043772">
    <property type="term" value="F:acyl-phosphate glycerol-3-phosphate acyltransferase activity"/>
    <property type="evidence" value="ECO:0007669"/>
    <property type="project" value="UniProtKB-UniRule"/>
</dbReference>
<dbReference type="GO" id="GO:0008654">
    <property type="term" value="P:phospholipid biosynthetic process"/>
    <property type="evidence" value="ECO:0007669"/>
    <property type="project" value="UniProtKB-UniRule"/>
</dbReference>
<dbReference type="HAMAP" id="MF_01043">
    <property type="entry name" value="PlsY"/>
    <property type="match status" value="1"/>
</dbReference>
<dbReference type="InterPro" id="IPR003811">
    <property type="entry name" value="G3P_acylTferase_PlsY"/>
</dbReference>
<dbReference type="NCBIfam" id="TIGR00023">
    <property type="entry name" value="glycerol-3-phosphate 1-O-acyltransferase PlsY"/>
    <property type="match status" value="1"/>
</dbReference>
<dbReference type="PANTHER" id="PTHR30309:SF0">
    <property type="entry name" value="GLYCEROL-3-PHOSPHATE ACYLTRANSFERASE-RELATED"/>
    <property type="match status" value="1"/>
</dbReference>
<dbReference type="PANTHER" id="PTHR30309">
    <property type="entry name" value="INNER MEMBRANE PROTEIN YGIH"/>
    <property type="match status" value="1"/>
</dbReference>
<dbReference type="Pfam" id="PF02660">
    <property type="entry name" value="G3P_acyltransf"/>
    <property type="match status" value="1"/>
</dbReference>
<dbReference type="SMART" id="SM01207">
    <property type="entry name" value="G3P_acyltransf"/>
    <property type="match status" value="1"/>
</dbReference>
<protein>
    <recommendedName>
        <fullName evidence="1">Glycerol-3-phosphate acyltransferase</fullName>
    </recommendedName>
    <alternativeName>
        <fullName evidence="1">Acyl-PO4 G3P acyltransferase</fullName>
    </alternativeName>
    <alternativeName>
        <fullName evidence="1">Acyl-phosphate--glycerol-3-phosphate acyltransferase</fullName>
    </alternativeName>
    <alternativeName>
        <fullName evidence="1">G3P acyltransferase</fullName>
        <shortName evidence="1">GPAT</shortName>
        <ecNumber evidence="1">2.3.1.275</ecNumber>
    </alternativeName>
    <alternativeName>
        <fullName evidence="1">Lysophosphatidic acid synthase</fullName>
        <shortName evidence="1">LPA synthase</shortName>
    </alternativeName>
</protein>
<gene>
    <name evidence="1" type="primary">plsY</name>
    <name type="ordered locus">ETA_04190</name>
</gene>
<comment type="function">
    <text evidence="1">Catalyzes the transfer of an acyl group from acyl-phosphate (acyl-PO(4)) to glycerol-3-phosphate (G3P) to form lysophosphatidic acid (LPA). This enzyme utilizes acyl-phosphate as fatty acyl donor, but not acyl-CoA or acyl-ACP.</text>
</comment>
<comment type="catalytic activity">
    <reaction evidence="1">
        <text>an acyl phosphate + sn-glycerol 3-phosphate = a 1-acyl-sn-glycero-3-phosphate + phosphate</text>
        <dbReference type="Rhea" id="RHEA:34075"/>
        <dbReference type="ChEBI" id="CHEBI:43474"/>
        <dbReference type="ChEBI" id="CHEBI:57597"/>
        <dbReference type="ChEBI" id="CHEBI:57970"/>
        <dbReference type="ChEBI" id="CHEBI:59918"/>
        <dbReference type="EC" id="2.3.1.275"/>
    </reaction>
</comment>
<comment type="pathway">
    <text evidence="1">Lipid metabolism; phospholipid metabolism.</text>
</comment>
<comment type="subunit">
    <text evidence="1">Probably interacts with PlsX.</text>
</comment>
<comment type="subcellular location">
    <subcellularLocation>
        <location evidence="1">Cell inner membrane</location>
        <topology evidence="1">Multi-pass membrane protein</topology>
    </subcellularLocation>
</comment>
<comment type="similarity">
    <text evidence="1">Belongs to the PlsY family.</text>
</comment>
<proteinExistence type="inferred from homology"/>